<sequence>MGQPAKVLQLFKTLHRTRQQVFKNDKRALEAARVKINEEFKKHKNETSPEKIKEMLKIGSDVELLLRTSVIQGIHTDHDTLQLVPRKDLLTENVPYCDAPTQKL</sequence>
<comment type="function">
    <text evidence="1">Assembly factor required for Rieske Fe-S protein UQCRFS1 incorporation into the cytochrome b-c1 (CIII) complex. Functions as a chaperone, binding to this subunit within the mitochondrial matrix and stabilizing it prior to its translocation and insertion into the late CIII dimeric intermediate within the mitochondrial inner membrane (By similarity).</text>
</comment>
<comment type="subunit">
    <text evidence="1">Interacts with UQCRFS1.</text>
</comment>
<comment type="subcellular location">
    <subcellularLocation>
        <location evidence="1">Mitochondrion matrix</location>
    </subcellularLocation>
</comment>
<comment type="similarity">
    <text evidence="3">Belongs to the complex I LYR family.</text>
</comment>
<proteinExistence type="inferred from homology"/>
<protein>
    <recommendedName>
        <fullName>Complex III assembly factor LYRM7</fullName>
    </recommendedName>
    <alternativeName>
        <fullName>LYR motif-containing protein 7</fullName>
    </alternativeName>
</protein>
<organism>
    <name type="scientific">Rattus norvegicus</name>
    <name type="common">Rat</name>
    <dbReference type="NCBI Taxonomy" id="10116"/>
    <lineage>
        <taxon>Eukaryota</taxon>
        <taxon>Metazoa</taxon>
        <taxon>Chordata</taxon>
        <taxon>Craniata</taxon>
        <taxon>Vertebrata</taxon>
        <taxon>Euteleostomi</taxon>
        <taxon>Mammalia</taxon>
        <taxon>Eutheria</taxon>
        <taxon>Euarchontoglires</taxon>
        <taxon>Glires</taxon>
        <taxon>Rodentia</taxon>
        <taxon>Myomorpha</taxon>
        <taxon>Muroidea</taxon>
        <taxon>Muridae</taxon>
        <taxon>Murinae</taxon>
        <taxon>Rattus</taxon>
    </lineage>
</organism>
<dbReference type="EMBL" id="BC168191">
    <property type="protein sequence ID" value="AAI68191.1"/>
    <property type="molecule type" value="mRNA"/>
</dbReference>
<dbReference type="RefSeq" id="NP_001128201.1">
    <property type="nucleotide sequence ID" value="NM_001134729.1"/>
</dbReference>
<dbReference type="SMR" id="B4F7A1"/>
<dbReference type="FunCoup" id="B4F7A1">
    <property type="interactions" value="352"/>
</dbReference>
<dbReference type="STRING" id="10116.ENSRNOP00000065804"/>
<dbReference type="iPTMnet" id="B4F7A1"/>
<dbReference type="PhosphoSitePlus" id="B4F7A1"/>
<dbReference type="PaxDb" id="10116-ENSRNOP00000065804"/>
<dbReference type="PeptideAtlas" id="B4F7A1"/>
<dbReference type="GeneID" id="686506"/>
<dbReference type="KEGG" id="rno:686506"/>
<dbReference type="UCSC" id="RGD:1596391">
    <property type="organism name" value="rat"/>
</dbReference>
<dbReference type="AGR" id="RGD:1596391"/>
<dbReference type="CTD" id="90624"/>
<dbReference type="RGD" id="1596391">
    <property type="gene designation" value="Lyrm7"/>
</dbReference>
<dbReference type="VEuPathDB" id="HostDB:ENSRNOG00000045961"/>
<dbReference type="eggNOG" id="ENOG502S5FU">
    <property type="taxonomic scope" value="Eukaryota"/>
</dbReference>
<dbReference type="HOGENOM" id="CLU_147114_1_1_1"/>
<dbReference type="InParanoid" id="B4F7A1"/>
<dbReference type="PhylomeDB" id="B4F7A1"/>
<dbReference type="Reactome" id="R-RNO-9865881">
    <property type="pathway name" value="Complex III assembly"/>
</dbReference>
<dbReference type="PRO" id="PR:B4F7A1"/>
<dbReference type="Proteomes" id="UP000002494">
    <property type="component" value="Chromosome 10"/>
</dbReference>
<dbReference type="Bgee" id="ENSRNOG00000045961">
    <property type="expression patterns" value="Expressed in testis and 19 other cell types or tissues"/>
</dbReference>
<dbReference type="GO" id="GO:0005759">
    <property type="term" value="C:mitochondrial matrix"/>
    <property type="evidence" value="ECO:0000266"/>
    <property type="project" value="RGD"/>
</dbReference>
<dbReference type="GO" id="GO:0031966">
    <property type="term" value="C:mitochondrial membrane"/>
    <property type="evidence" value="ECO:0000266"/>
    <property type="project" value="RGD"/>
</dbReference>
<dbReference type="GO" id="GO:0044183">
    <property type="term" value="F:protein folding chaperone"/>
    <property type="evidence" value="ECO:0000318"/>
    <property type="project" value="GO_Central"/>
</dbReference>
<dbReference type="GO" id="GO:0045333">
    <property type="term" value="P:cellular respiration"/>
    <property type="evidence" value="ECO:0000266"/>
    <property type="project" value="RGD"/>
</dbReference>
<dbReference type="GO" id="GO:0034551">
    <property type="term" value="P:mitochondrial respiratory chain complex III assembly"/>
    <property type="evidence" value="ECO:0000266"/>
    <property type="project" value="RGD"/>
</dbReference>
<dbReference type="CDD" id="cd20267">
    <property type="entry name" value="Complex1_LYR_LYRM7"/>
    <property type="match status" value="1"/>
</dbReference>
<dbReference type="InterPro" id="IPR008011">
    <property type="entry name" value="Complex1_LYR_dom"/>
</dbReference>
<dbReference type="InterPro" id="IPR045298">
    <property type="entry name" value="Complex1_LYR_LYRM7"/>
</dbReference>
<dbReference type="InterPro" id="IPR050435">
    <property type="entry name" value="MZM1/LYRM7"/>
</dbReference>
<dbReference type="PANTHER" id="PTHR46749">
    <property type="entry name" value="COMPLEX III ASSEMBLY FACTOR LYRM7"/>
    <property type="match status" value="1"/>
</dbReference>
<dbReference type="PANTHER" id="PTHR46749:SF1">
    <property type="entry name" value="COMPLEX III ASSEMBLY FACTOR LYRM7"/>
    <property type="match status" value="1"/>
</dbReference>
<dbReference type="Pfam" id="PF05347">
    <property type="entry name" value="Complex1_LYR"/>
    <property type="match status" value="1"/>
</dbReference>
<gene>
    <name type="primary">Lyrm7</name>
    <name type="synonym">MZM1L</name>
</gene>
<name>LYRM7_RAT</name>
<reference key="1">
    <citation type="journal article" date="2004" name="Genome Res.">
        <title>The status, quality, and expansion of the NIH full-length cDNA project: the Mammalian Gene Collection (MGC).</title>
        <authorList>
            <consortium name="The MGC Project Team"/>
        </authorList>
    </citation>
    <scope>NUCLEOTIDE SEQUENCE [LARGE SCALE MRNA]</scope>
    <source>
        <tissue>Kidney</tissue>
    </source>
</reference>
<feature type="chain" id="PRO_0000370340" description="Complex III assembly factor LYRM7">
    <location>
        <begin position="1"/>
        <end position="104"/>
    </location>
</feature>
<feature type="modified residue" description="Phosphoserine" evidence="2">
    <location>
        <position position="60"/>
    </location>
</feature>
<keyword id="KW-0143">Chaperone</keyword>
<keyword id="KW-0496">Mitochondrion</keyword>
<keyword id="KW-0597">Phosphoprotein</keyword>
<keyword id="KW-1185">Reference proteome</keyword>
<evidence type="ECO:0000250" key="1"/>
<evidence type="ECO:0000250" key="2">
    <source>
        <dbReference type="UniProtKB" id="Q5U5X0"/>
    </source>
</evidence>
<evidence type="ECO:0000305" key="3"/>
<accession>B4F7A1</accession>